<name>TRUA1_DESPS</name>
<sequence>MRNICLLIAFDGTDYSGWQKQHHANTIQGEIEARLKRLSVKEISLHGAGRTDAGVHADGMTAHFHTDTRLTCNDFQRALNRMLPGAIRILQVREMADDFHARFAATGKEYHYRLFTGGVIPPQKRLYMLHQEKPIDQEAMQKCLQIIIGTHDFSSFENTGSRDKTRTGGKGAVRTILEARYEQFEEDSWHFVFIGDGFLRNMVRNIVGSILEVGRGKESVEWFEQALKEKDRNAAGPTAPAHGLKLFQVFY</sequence>
<protein>
    <recommendedName>
        <fullName evidence="1">tRNA pseudouridine synthase A 1</fullName>
        <ecNumber evidence="1">5.4.99.12</ecNumber>
    </recommendedName>
    <alternativeName>
        <fullName evidence="1">tRNA pseudouridine(38-40) synthase</fullName>
    </alternativeName>
    <alternativeName>
        <fullName evidence="1">tRNA pseudouridylate synthase I 1</fullName>
    </alternativeName>
    <alternativeName>
        <fullName evidence="1">tRNA-uridine isomerase I 1</fullName>
    </alternativeName>
</protein>
<feature type="chain" id="PRO_0000057372" description="tRNA pseudouridine synthase A 1">
    <location>
        <begin position="1"/>
        <end position="251"/>
    </location>
</feature>
<feature type="active site" description="Nucleophile" evidence="1">
    <location>
        <position position="52"/>
    </location>
</feature>
<feature type="binding site" evidence="1">
    <location>
        <position position="110"/>
    </location>
    <ligand>
        <name>substrate</name>
    </ligand>
</feature>
<organism>
    <name type="scientific">Desulfotalea psychrophila (strain LSv54 / DSM 12343)</name>
    <dbReference type="NCBI Taxonomy" id="177439"/>
    <lineage>
        <taxon>Bacteria</taxon>
        <taxon>Pseudomonadati</taxon>
        <taxon>Thermodesulfobacteriota</taxon>
        <taxon>Desulfobulbia</taxon>
        <taxon>Desulfobulbales</taxon>
        <taxon>Desulfocapsaceae</taxon>
        <taxon>Desulfotalea</taxon>
    </lineage>
</organism>
<reference key="1">
    <citation type="journal article" date="2004" name="Environ. Microbiol.">
        <title>The genome of Desulfotalea psychrophila, a sulfate-reducing bacterium from permanently cold Arctic sediments.</title>
        <authorList>
            <person name="Rabus R."/>
            <person name="Ruepp A."/>
            <person name="Frickey T."/>
            <person name="Rattei T."/>
            <person name="Fartmann B."/>
            <person name="Stark M."/>
            <person name="Bauer M."/>
            <person name="Zibat A."/>
            <person name="Lombardot T."/>
            <person name="Becker I."/>
            <person name="Amann J."/>
            <person name="Gellner K."/>
            <person name="Teeling H."/>
            <person name="Leuschner W.D."/>
            <person name="Gloeckner F.-O."/>
            <person name="Lupas A.N."/>
            <person name="Amann R."/>
            <person name="Klenk H.-P."/>
        </authorList>
    </citation>
    <scope>NUCLEOTIDE SEQUENCE [LARGE SCALE GENOMIC DNA]</scope>
    <source>
        <strain>DSM 12343 / LSv54</strain>
    </source>
</reference>
<keyword id="KW-0413">Isomerase</keyword>
<keyword id="KW-1185">Reference proteome</keyword>
<keyword id="KW-0819">tRNA processing</keyword>
<proteinExistence type="inferred from homology"/>
<accession>Q6ANM1</accession>
<gene>
    <name evidence="1" type="primary">truA1</name>
    <name type="ordered locus">DP1324</name>
</gene>
<evidence type="ECO:0000255" key="1">
    <source>
        <dbReference type="HAMAP-Rule" id="MF_00171"/>
    </source>
</evidence>
<dbReference type="EC" id="5.4.99.12" evidence="1"/>
<dbReference type="EMBL" id="CR522870">
    <property type="protein sequence ID" value="CAG36053.1"/>
    <property type="molecule type" value="Genomic_DNA"/>
</dbReference>
<dbReference type="RefSeq" id="WP_011188565.1">
    <property type="nucleotide sequence ID" value="NC_006138.1"/>
</dbReference>
<dbReference type="SMR" id="Q6ANM1"/>
<dbReference type="STRING" id="177439.DP1324"/>
<dbReference type="KEGG" id="dps:DP1324"/>
<dbReference type="eggNOG" id="COG0101">
    <property type="taxonomic scope" value="Bacteria"/>
</dbReference>
<dbReference type="HOGENOM" id="CLU_014673_0_1_7"/>
<dbReference type="OrthoDB" id="9811823at2"/>
<dbReference type="Proteomes" id="UP000000602">
    <property type="component" value="Chromosome"/>
</dbReference>
<dbReference type="GO" id="GO:0003723">
    <property type="term" value="F:RNA binding"/>
    <property type="evidence" value="ECO:0007669"/>
    <property type="project" value="InterPro"/>
</dbReference>
<dbReference type="GO" id="GO:0160147">
    <property type="term" value="F:tRNA pseudouridine(38-40) synthase activity"/>
    <property type="evidence" value="ECO:0007669"/>
    <property type="project" value="UniProtKB-EC"/>
</dbReference>
<dbReference type="GO" id="GO:0031119">
    <property type="term" value="P:tRNA pseudouridine synthesis"/>
    <property type="evidence" value="ECO:0007669"/>
    <property type="project" value="UniProtKB-UniRule"/>
</dbReference>
<dbReference type="CDD" id="cd02570">
    <property type="entry name" value="PseudoU_synth_EcTruA"/>
    <property type="match status" value="1"/>
</dbReference>
<dbReference type="FunFam" id="3.30.70.580:FF:000001">
    <property type="entry name" value="tRNA pseudouridine synthase A"/>
    <property type="match status" value="1"/>
</dbReference>
<dbReference type="Gene3D" id="3.30.70.660">
    <property type="entry name" value="Pseudouridine synthase I, catalytic domain, C-terminal subdomain"/>
    <property type="match status" value="1"/>
</dbReference>
<dbReference type="Gene3D" id="3.30.70.580">
    <property type="entry name" value="Pseudouridine synthase I, catalytic domain, N-terminal subdomain"/>
    <property type="match status" value="1"/>
</dbReference>
<dbReference type="HAMAP" id="MF_00171">
    <property type="entry name" value="TruA"/>
    <property type="match status" value="1"/>
</dbReference>
<dbReference type="InterPro" id="IPR020103">
    <property type="entry name" value="PsdUridine_synth_cat_dom_sf"/>
</dbReference>
<dbReference type="InterPro" id="IPR001406">
    <property type="entry name" value="PsdUridine_synth_TruA"/>
</dbReference>
<dbReference type="InterPro" id="IPR020097">
    <property type="entry name" value="PsdUridine_synth_TruA_a/b_dom"/>
</dbReference>
<dbReference type="InterPro" id="IPR020095">
    <property type="entry name" value="PsdUridine_synth_TruA_C"/>
</dbReference>
<dbReference type="InterPro" id="IPR020094">
    <property type="entry name" value="TruA/RsuA/RluB/E/F_N"/>
</dbReference>
<dbReference type="NCBIfam" id="TIGR00071">
    <property type="entry name" value="hisT_truA"/>
    <property type="match status" value="1"/>
</dbReference>
<dbReference type="PANTHER" id="PTHR11142">
    <property type="entry name" value="PSEUDOURIDYLATE SYNTHASE"/>
    <property type="match status" value="1"/>
</dbReference>
<dbReference type="PANTHER" id="PTHR11142:SF0">
    <property type="entry name" value="TRNA PSEUDOURIDINE SYNTHASE-LIKE 1"/>
    <property type="match status" value="1"/>
</dbReference>
<dbReference type="Pfam" id="PF01416">
    <property type="entry name" value="PseudoU_synth_1"/>
    <property type="match status" value="2"/>
</dbReference>
<dbReference type="PIRSF" id="PIRSF001430">
    <property type="entry name" value="tRNA_psdUrid_synth"/>
    <property type="match status" value="1"/>
</dbReference>
<dbReference type="SUPFAM" id="SSF55120">
    <property type="entry name" value="Pseudouridine synthase"/>
    <property type="match status" value="1"/>
</dbReference>
<comment type="function">
    <text evidence="1">Formation of pseudouridine at positions 38, 39 and 40 in the anticodon stem and loop of transfer RNAs.</text>
</comment>
<comment type="catalytic activity">
    <reaction evidence="1">
        <text>uridine(38/39/40) in tRNA = pseudouridine(38/39/40) in tRNA</text>
        <dbReference type="Rhea" id="RHEA:22376"/>
        <dbReference type="Rhea" id="RHEA-COMP:10085"/>
        <dbReference type="Rhea" id="RHEA-COMP:10087"/>
        <dbReference type="ChEBI" id="CHEBI:65314"/>
        <dbReference type="ChEBI" id="CHEBI:65315"/>
        <dbReference type="EC" id="5.4.99.12"/>
    </reaction>
</comment>
<comment type="subunit">
    <text evidence="1">Homodimer.</text>
</comment>
<comment type="similarity">
    <text evidence="1">Belongs to the tRNA pseudouridine synthase TruA family.</text>
</comment>